<sequence length="509" mass="57742">MNESEIPIDIHTLKLQDWLISRRIVPKNVQQELREIHRKISNALQDMPSNEQLIKLLARTNINYYHVKEIIEILKQTEKDTKSVFGTYGSQRMKDWQEISRLYEKNATYLAETAQIFVRNVNYEIPGVRKQMARLEQQADETQKRAHDLNKPESQILADHSALLEQLGVKGDNLHAEFVQVLSGLPELYDKSLVGIANIQPGIDLYAEVSGNKQVLPILNHLVEFGNTTVYQYIHKEAPLAVEEPPIRLNLSEGNASKDDNAVAEIDFGTDDNGGTSSTVSAEIIDYGDFGSGDLPESDGGNIDWGIESAPTDAVEINFDIPVEEYGIVVEGTGMDGGTAKGDQAYTLLDSPNYRDRFLDEIYELESFLRMRIYELKQLESSSDIMFSLMDNIATHDGESIWKILVSVEKIIQQTSDKQTQHLFQLKHSPKYANMLATKLQQMTKAVEKLRATREALKQLTIELREQRQDLNPVLEELIAQTRTLQSHIEKDISKRYKNRVVNLMGGVN</sequence>
<gene>
    <name evidence="3" type="ORF">CG30291</name>
</gene>
<protein>
    <recommendedName>
        <fullName evidence="2">CDK5RAP3 protein homolog</fullName>
    </recommendedName>
</protein>
<comment type="function">
    <text evidence="1">Substrate adapter of E3 ligase complexes mediating ufmylation, the covalent attachment of the ubiquitin-like modifier UFM1 to substrate proteins, and which is involved in various processes, such as ribosome recycling and reticulophagy (also called ER-phagy).</text>
</comment>
<comment type="subcellular location">
    <subcellularLocation>
        <location evidence="1">Nucleus</location>
    </subcellularLocation>
    <subcellularLocation>
        <location evidence="1">Cytoplasm</location>
    </subcellularLocation>
</comment>
<comment type="similarity">
    <text evidence="2">Belongs to the CDK5RAP3 family.</text>
</comment>
<name>CK5P3_DROME</name>
<dbReference type="EMBL" id="AE013599">
    <property type="protein sequence ID" value="AAM68189.1"/>
    <property type="molecule type" value="Genomic_DNA"/>
</dbReference>
<dbReference type="EMBL" id="AY060743">
    <property type="protein sequence ID" value="AAL28291.1"/>
    <property type="molecule type" value="mRNA"/>
</dbReference>
<dbReference type="RefSeq" id="NP_726016.1">
    <property type="nucleotide sequence ID" value="NM_166417.2"/>
</dbReference>
<dbReference type="SMR" id="Q95SK3"/>
<dbReference type="BioGRID" id="73099">
    <property type="interactions" value="5"/>
</dbReference>
<dbReference type="DIP" id="DIP-19388N"/>
<dbReference type="FunCoup" id="Q95SK3">
    <property type="interactions" value="1696"/>
</dbReference>
<dbReference type="IntAct" id="Q95SK3">
    <property type="interactions" value="2"/>
</dbReference>
<dbReference type="STRING" id="7227.FBpp0071478"/>
<dbReference type="PaxDb" id="7227-FBpp0071478"/>
<dbReference type="DNASU" id="246534"/>
<dbReference type="EnsemblMetazoa" id="FBtr0071549">
    <property type="protein sequence ID" value="FBpp0071478"/>
    <property type="gene ID" value="FBgn0050291"/>
</dbReference>
<dbReference type="GeneID" id="246534"/>
<dbReference type="KEGG" id="dme:Dmel_CG30291"/>
<dbReference type="UCSC" id="CG30291-RA">
    <property type="organism name" value="d. melanogaster"/>
</dbReference>
<dbReference type="AGR" id="FB:FBgn0050291"/>
<dbReference type="FlyBase" id="FBgn0050291">
    <property type="gene designation" value="CG30291"/>
</dbReference>
<dbReference type="VEuPathDB" id="VectorBase:FBgn0050291"/>
<dbReference type="eggNOG" id="KOG2607">
    <property type="taxonomic scope" value="Eukaryota"/>
</dbReference>
<dbReference type="GeneTree" id="ENSGT00390000000713"/>
<dbReference type="HOGENOM" id="CLU_025645_1_0_1"/>
<dbReference type="InParanoid" id="Q95SK3"/>
<dbReference type="OMA" id="CRLYEKN"/>
<dbReference type="OrthoDB" id="340432at2759"/>
<dbReference type="PhylomeDB" id="Q95SK3"/>
<dbReference type="BioGRID-ORCS" id="246534">
    <property type="hits" value="0 hits in 1 CRISPR screen"/>
</dbReference>
<dbReference type="GenomeRNAi" id="246534"/>
<dbReference type="PRO" id="PR:Q95SK3"/>
<dbReference type="Proteomes" id="UP000000803">
    <property type="component" value="Chromosome 2R"/>
</dbReference>
<dbReference type="Bgee" id="FBgn0050291">
    <property type="expression patterns" value="Expressed in spermatid in male reproductive gland and 105 other cell types or tissues"/>
</dbReference>
<dbReference type="GO" id="GO:0005737">
    <property type="term" value="C:cytoplasm"/>
    <property type="evidence" value="ECO:0007669"/>
    <property type="project" value="UniProtKB-SubCell"/>
</dbReference>
<dbReference type="GO" id="GO:0012505">
    <property type="term" value="C:endomembrane system"/>
    <property type="evidence" value="ECO:0007005"/>
    <property type="project" value="FlyBase"/>
</dbReference>
<dbReference type="GO" id="GO:0005634">
    <property type="term" value="C:nucleus"/>
    <property type="evidence" value="ECO:0007669"/>
    <property type="project" value="UniProtKB-SubCell"/>
</dbReference>
<dbReference type="GO" id="GO:0000079">
    <property type="term" value="P:regulation of cyclin-dependent protein serine/threonine kinase activity"/>
    <property type="evidence" value="ECO:0000250"/>
    <property type="project" value="UniProtKB"/>
</dbReference>
<dbReference type="GO" id="GO:0007346">
    <property type="term" value="P:regulation of mitotic cell cycle"/>
    <property type="evidence" value="ECO:0000318"/>
    <property type="project" value="GO_Central"/>
</dbReference>
<dbReference type="InterPro" id="IPR008491">
    <property type="entry name" value="CDK5RAP3"/>
</dbReference>
<dbReference type="PANTHER" id="PTHR14894">
    <property type="entry name" value="CDK5 REGULATORY SUBUNIT-ASSOCIATED PROTEIN 3"/>
    <property type="match status" value="1"/>
</dbReference>
<dbReference type="PANTHER" id="PTHR14894:SF0">
    <property type="entry name" value="CDK5 REGULATORY SUBUNIT-ASSOCIATED PROTEIN 3"/>
    <property type="match status" value="1"/>
</dbReference>
<dbReference type="Pfam" id="PF05600">
    <property type="entry name" value="CDK5RAP3"/>
    <property type="match status" value="1"/>
</dbReference>
<reference key="1">
    <citation type="journal article" date="2000" name="Science">
        <title>The genome sequence of Drosophila melanogaster.</title>
        <authorList>
            <person name="Adams M.D."/>
            <person name="Celniker S.E."/>
            <person name="Holt R.A."/>
            <person name="Evans C.A."/>
            <person name="Gocayne J.D."/>
            <person name="Amanatides P.G."/>
            <person name="Scherer S.E."/>
            <person name="Li P.W."/>
            <person name="Hoskins R.A."/>
            <person name="Galle R.F."/>
            <person name="George R.A."/>
            <person name="Lewis S.E."/>
            <person name="Richards S."/>
            <person name="Ashburner M."/>
            <person name="Henderson S.N."/>
            <person name="Sutton G.G."/>
            <person name="Wortman J.R."/>
            <person name="Yandell M.D."/>
            <person name="Zhang Q."/>
            <person name="Chen L.X."/>
            <person name="Brandon R.C."/>
            <person name="Rogers Y.-H.C."/>
            <person name="Blazej R.G."/>
            <person name="Champe M."/>
            <person name="Pfeiffer B.D."/>
            <person name="Wan K.H."/>
            <person name="Doyle C."/>
            <person name="Baxter E.G."/>
            <person name="Helt G."/>
            <person name="Nelson C.R."/>
            <person name="Miklos G.L.G."/>
            <person name="Abril J.F."/>
            <person name="Agbayani A."/>
            <person name="An H.-J."/>
            <person name="Andrews-Pfannkoch C."/>
            <person name="Baldwin D."/>
            <person name="Ballew R.M."/>
            <person name="Basu A."/>
            <person name="Baxendale J."/>
            <person name="Bayraktaroglu L."/>
            <person name="Beasley E.M."/>
            <person name="Beeson K.Y."/>
            <person name="Benos P.V."/>
            <person name="Berman B.P."/>
            <person name="Bhandari D."/>
            <person name="Bolshakov S."/>
            <person name="Borkova D."/>
            <person name="Botchan M.R."/>
            <person name="Bouck J."/>
            <person name="Brokstein P."/>
            <person name="Brottier P."/>
            <person name="Burtis K.C."/>
            <person name="Busam D.A."/>
            <person name="Butler H."/>
            <person name="Cadieu E."/>
            <person name="Center A."/>
            <person name="Chandra I."/>
            <person name="Cherry J.M."/>
            <person name="Cawley S."/>
            <person name="Dahlke C."/>
            <person name="Davenport L.B."/>
            <person name="Davies P."/>
            <person name="de Pablos B."/>
            <person name="Delcher A."/>
            <person name="Deng Z."/>
            <person name="Mays A.D."/>
            <person name="Dew I."/>
            <person name="Dietz S.M."/>
            <person name="Dodson K."/>
            <person name="Doup L.E."/>
            <person name="Downes M."/>
            <person name="Dugan-Rocha S."/>
            <person name="Dunkov B.C."/>
            <person name="Dunn P."/>
            <person name="Durbin K.J."/>
            <person name="Evangelista C.C."/>
            <person name="Ferraz C."/>
            <person name="Ferriera S."/>
            <person name="Fleischmann W."/>
            <person name="Fosler C."/>
            <person name="Gabrielian A.E."/>
            <person name="Garg N.S."/>
            <person name="Gelbart W.M."/>
            <person name="Glasser K."/>
            <person name="Glodek A."/>
            <person name="Gong F."/>
            <person name="Gorrell J.H."/>
            <person name="Gu Z."/>
            <person name="Guan P."/>
            <person name="Harris M."/>
            <person name="Harris N.L."/>
            <person name="Harvey D.A."/>
            <person name="Heiman T.J."/>
            <person name="Hernandez J.R."/>
            <person name="Houck J."/>
            <person name="Hostin D."/>
            <person name="Houston K.A."/>
            <person name="Howland T.J."/>
            <person name="Wei M.-H."/>
            <person name="Ibegwam C."/>
            <person name="Jalali M."/>
            <person name="Kalush F."/>
            <person name="Karpen G.H."/>
            <person name="Ke Z."/>
            <person name="Kennison J.A."/>
            <person name="Ketchum K.A."/>
            <person name="Kimmel B.E."/>
            <person name="Kodira C.D."/>
            <person name="Kraft C.L."/>
            <person name="Kravitz S."/>
            <person name="Kulp D."/>
            <person name="Lai Z."/>
            <person name="Lasko P."/>
            <person name="Lei Y."/>
            <person name="Levitsky A.A."/>
            <person name="Li J.H."/>
            <person name="Li Z."/>
            <person name="Liang Y."/>
            <person name="Lin X."/>
            <person name="Liu X."/>
            <person name="Mattei B."/>
            <person name="McIntosh T.C."/>
            <person name="McLeod M.P."/>
            <person name="McPherson D."/>
            <person name="Merkulov G."/>
            <person name="Milshina N.V."/>
            <person name="Mobarry C."/>
            <person name="Morris J."/>
            <person name="Moshrefi A."/>
            <person name="Mount S.M."/>
            <person name="Moy M."/>
            <person name="Murphy B."/>
            <person name="Murphy L."/>
            <person name="Muzny D.M."/>
            <person name="Nelson D.L."/>
            <person name="Nelson D.R."/>
            <person name="Nelson K.A."/>
            <person name="Nixon K."/>
            <person name="Nusskern D.R."/>
            <person name="Pacleb J.M."/>
            <person name="Palazzolo M."/>
            <person name="Pittman G.S."/>
            <person name="Pan S."/>
            <person name="Pollard J."/>
            <person name="Puri V."/>
            <person name="Reese M.G."/>
            <person name="Reinert K."/>
            <person name="Remington K."/>
            <person name="Saunders R.D.C."/>
            <person name="Scheeler F."/>
            <person name="Shen H."/>
            <person name="Shue B.C."/>
            <person name="Siden-Kiamos I."/>
            <person name="Simpson M."/>
            <person name="Skupski M.P."/>
            <person name="Smith T.J."/>
            <person name="Spier E."/>
            <person name="Spradling A.C."/>
            <person name="Stapleton M."/>
            <person name="Strong R."/>
            <person name="Sun E."/>
            <person name="Svirskas R."/>
            <person name="Tector C."/>
            <person name="Turner R."/>
            <person name="Venter E."/>
            <person name="Wang A.H."/>
            <person name="Wang X."/>
            <person name="Wang Z.-Y."/>
            <person name="Wassarman D.A."/>
            <person name="Weinstock G.M."/>
            <person name="Weissenbach J."/>
            <person name="Williams S.M."/>
            <person name="Woodage T."/>
            <person name="Worley K.C."/>
            <person name="Wu D."/>
            <person name="Yang S."/>
            <person name="Yao Q.A."/>
            <person name="Ye J."/>
            <person name="Yeh R.-F."/>
            <person name="Zaveri J.S."/>
            <person name="Zhan M."/>
            <person name="Zhang G."/>
            <person name="Zhao Q."/>
            <person name="Zheng L."/>
            <person name="Zheng X.H."/>
            <person name="Zhong F.N."/>
            <person name="Zhong W."/>
            <person name="Zhou X."/>
            <person name="Zhu S.C."/>
            <person name="Zhu X."/>
            <person name="Smith H.O."/>
            <person name="Gibbs R.A."/>
            <person name="Myers E.W."/>
            <person name="Rubin G.M."/>
            <person name="Venter J.C."/>
        </authorList>
    </citation>
    <scope>NUCLEOTIDE SEQUENCE [LARGE SCALE GENOMIC DNA]</scope>
    <source>
        <strain>Berkeley</strain>
    </source>
</reference>
<reference key="2">
    <citation type="journal article" date="2002" name="Genome Biol.">
        <title>Annotation of the Drosophila melanogaster euchromatic genome: a systematic review.</title>
        <authorList>
            <person name="Misra S."/>
            <person name="Crosby M.A."/>
            <person name="Mungall C.J."/>
            <person name="Matthews B.B."/>
            <person name="Campbell K.S."/>
            <person name="Hradecky P."/>
            <person name="Huang Y."/>
            <person name="Kaminker J.S."/>
            <person name="Millburn G.H."/>
            <person name="Prochnik S.E."/>
            <person name="Smith C.D."/>
            <person name="Tupy J.L."/>
            <person name="Whitfield E.J."/>
            <person name="Bayraktaroglu L."/>
            <person name="Berman B.P."/>
            <person name="Bettencourt B.R."/>
            <person name="Celniker S.E."/>
            <person name="de Grey A.D.N.J."/>
            <person name="Drysdale R.A."/>
            <person name="Harris N.L."/>
            <person name="Richter J."/>
            <person name="Russo S."/>
            <person name="Schroeder A.J."/>
            <person name="Shu S.Q."/>
            <person name="Stapleton M."/>
            <person name="Yamada C."/>
            <person name="Ashburner M."/>
            <person name="Gelbart W.M."/>
            <person name="Rubin G.M."/>
            <person name="Lewis S.E."/>
        </authorList>
    </citation>
    <scope>GENOME REANNOTATION</scope>
    <source>
        <strain>Berkeley</strain>
    </source>
</reference>
<reference key="3">
    <citation type="journal article" date="2002" name="Genome Biol.">
        <title>A Drosophila full-length cDNA resource.</title>
        <authorList>
            <person name="Stapleton M."/>
            <person name="Carlson J.W."/>
            <person name="Brokstein P."/>
            <person name="Yu C."/>
            <person name="Champe M."/>
            <person name="George R.A."/>
            <person name="Guarin H."/>
            <person name="Kronmiller B."/>
            <person name="Pacleb J.M."/>
            <person name="Park S."/>
            <person name="Wan K.H."/>
            <person name="Rubin G.M."/>
            <person name="Celniker S.E."/>
        </authorList>
    </citation>
    <scope>NUCLEOTIDE SEQUENCE [LARGE SCALE MRNA]</scope>
    <source>
        <strain>Berkeley</strain>
        <tissue>Head</tissue>
    </source>
</reference>
<organism>
    <name type="scientific">Drosophila melanogaster</name>
    <name type="common">Fruit fly</name>
    <dbReference type="NCBI Taxonomy" id="7227"/>
    <lineage>
        <taxon>Eukaryota</taxon>
        <taxon>Metazoa</taxon>
        <taxon>Ecdysozoa</taxon>
        <taxon>Arthropoda</taxon>
        <taxon>Hexapoda</taxon>
        <taxon>Insecta</taxon>
        <taxon>Pterygota</taxon>
        <taxon>Neoptera</taxon>
        <taxon>Endopterygota</taxon>
        <taxon>Diptera</taxon>
        <taxon>Brachycera</taxon>
        <taxon>Muscomorpha</taxon>
        <taxon>Ephydroidea</taxon>
        <taxon>Drosophilidae</taxon>
        <taxon>Drosophila</taxon>
        <taxon>Sophophora</taxon>
    </lineage>
</organism>
<accession>Q95SK3</accession>
<keyword id="KW-0963">Cytoplasm</keyword>
<keyword id="KW-0539">Nucleus</keyword>
<keyword id="KW-1185">Reference proteome</keyword>
<keyword id="KW-0833">Ubl conjugation pathway</keyword>
<evidence type="ECO:0000250" key="1">
    <source>
        <dbReference type="UniProtKB" id="Q96JB5"/>
    </source>
</evidence>
<evidence type="ECO:0000305" key="2"/>
<evidence type="ECO:0000312" key="3">
    <source>
        <dbReference type="FlyBase" id="FBgn0050291"/>
    </source>
</evidence>
<feature type="chain" id="PRO_0000220521" description="CDK5RAP3 protein homolog">
    <location>
        <begin position="1"/>
        <end position="509"/>
    </location>
</feature>
<proteinExistence type="evidence at transcript level"/>